<evidence type="ECO:0000255" key="1">
    <source>
        <dbReference type="HAMAP-Rule" id="MF_01013"/>
    </source>
</evidence>
<sequence length="252" mass="27797">MIKKRVIPCLDVKDGRVVKGIQFQSLRDIGNPVDLALYYNEAGADELVFLDISKTEAGHDLMIEVIEATAKQLFIPLTVGGGIQNLDDITQLLNHGADKISLNSSALKHPELIRQASEKFGRQCICIAIDSFYDKDRKDYFCTTHGGKKLTDVRVYDWVQEVELLGAGELLITSMHHDGMKQGFDIEHLAKIKQLVNIPIIASGGGGNAQHFVELFQQTDVSAGLAASILHDQETTVAEIKDKMREGGILVR</sequence>
<dbReference type="EC" id="4.3.2.10" evidence="1"/>
<dbReference type="EMBL" id="AE015929">
    <property type="protein sequence ID" value="AAO03873.1"/>
    <property type="molecule type" value="Genomic_DNA"/>
</dbReference>
<dbReference type="RefSeq" id="NP_763831.1">
    <property type="nucleotide sequence ID" value="NC_004461.1"/>
</dbReference>
<dbReference type="RefSeq" id="WP_001829431.1">
    <property type="nucleotide sequence ID" value="NZ_WBME01000037.1"/>
</dbReference>
<dbReference type="SMR" id="Q8CQ92"/>
<dbReference type="GeneID" id="50017670"/>
<dbReference type="KEGG" id="sep:SE_0276"/>
<dbReference type="PATRIC" id="fig|176280.10.peg.254"/>
<dbReference type="eggNOG" id="COG0107">
    <property type="taxonomic scope" value="Bacteria"/>
</dbReference>
<dbReference type="HOGENOM" id="CLU_048577_4_0_9"/>
<dbReference type="OrthoDB" id="9781903at2"/>
<dbReference type="UniPathway" id="UPA00031">
    <property type="reaction ID" value="UER00010"/>
</dbReference>
<dbReference type="Proteomes" id="UP000001411">
    <property type="component" value="Chromosome"/>
</dbReference>
<dbReference type="GO" id="GO:0005737">
    <property type="term" value="C:cytoplasm"/>
    <property type="evidence" value="ECO:0007669"/>
    <property type="project" value="UniProtKB-SubCell"/>
</dbReference>
<dbReference type="GO" id="GO:0000107">
    <property type="term" value="F:imidazoleglycerol-phosphate synthase activity"/>
    <property type="evidence" value="ECO:0007669"/>
    <property type="project" value="UniProtKB-UniRule"/>
</dbReference>
<dbReference type="GO" id="GO:0016829">
    <property type="term" value="F:lyase activity"/>
    <property type="evidence" value="ECO:0007669"/>
    <property type="project" value="UniProtKB-KW"/>
</dbReference>
<dbReference type="GO" id="GO:0000105">
    <property type="term" value="P:L-histidine biosynthetic process"/>
    <property type="evidence" value="ECO:0007669"/>
    <property type="project" value="UniProtKB-UniRule"/>
</dbReference>
<dbReference type="CDD" id="cd04731">
    <property type="entry name" value="HisF"/>
    <property type="match status" value="1"/>
</dbReference>
<dbReference type="Gene3D" id="3.20.20.70">
    <property type="entry name" value="Aldolase class I"/>
    <property type="match status" value="1"/>
</dbReference>
<dbReference type="HAMAP" id="MF_01013">
    <property type="entry name" value="HisF"/>
    <property type="match status" value="1"/>
</dbReference>
<dbReference type="InterPro" id="IPR013785">
    <property type="entry name" value="Aldolase_TIM"/>
</dbReference>
<dbReference type="InterPro" id="IPR006062">
    <property type="entry name" value="His_biosynth"/>
</dbReference>
<dbReference type="InterPro" id="IPR004651">
    <property type="entry name" value="HisF"/>
</dbReference>
<dbReference type="InterPro" id="IPR050064">
    <property type="entry name" value="IGPS_HisA/HisF"/>
</dbReference>
<dbReference type="InterPro" id="IPR011060">
    <property type="entry name" value="RibuloseP-bd_barrel"/>
</dbReference>
<dbReference type="NCBIfam" id="TIGR00735">
    <property type="entry name" value="hisF"/>
    <property type="match status" value="1"/>
</dbReference>
<dbReference type="PANTHER" id="PTHR21235:SF2">
    <property type="entry name" value="IMIDAZOLE GLYCEROL PHOSPHATE SYNTHASE HISHF"/>
    <property type="match status" value="1"/>
</dbReference>
<dbReference type="PANTHER" id="PTHR21235">
    <property type="entry name" value="IMIDAZOLE GLYCEROL PHOSPHATE SYNTHASE SUBUNIT HISF/H IGP SYNTHASE SUBUNIT HISF/H"/>
    <property type="match status" value="1"/>
</dbReference>
<dbReference type="Pfam" id="PF00977">
    <property type="entry name" value="His_biosynth"/>
    <property type="match status" value="1"/>
</dbReference>
<dbReference type="SUPFAM" id="SSF51366">
    <property type="entry name" value="Ribulose-phoshate binding barrel"/>
    <property type="match status" value="1"/>
</dbReference>
<name>HIS6_STAES</name>
<gene>
    <name evidence="1" type="primary">hisF</name>
    <name type="ordered locus">SE_0276</name>
</gene>
<proteinExistence type="inferred from homology"/>
<protein>
    <recommendedName>
        <fullName evidence="1">Imidazole glycerol phosphate synthase subunit HisF</fullName>
        <ecNumber evidence="1">4.3.2.10</ecNumber>
    </recommendedName>
    <alternativeName>
        <fullName evidence="1">IGP synthase cyclase subunit</fullName>
    </alternativeName>
    <alternativeName>
        <fullName evidence="1">IGP synthase subunit HisF</fullName>
    </alternativeName>
    <alternativeName>
        <fullName evidence="1">ImGP synthase subunit HisF</fullName>
        <shortName evidence="1">IGPS subunit HisF</shortName>
    </alternativeName>
</protein>
<reference key="1">
    <citation type="journal article" date="2003" name="Mol. Microbiol.">
        <title>Genome-based analysis of virulence genes in a non-biofilm-forming Staphylococcus epidermidis strain (ATCC 12228).</title>
        <authorList>
            <person name="Zhang Y.-Q."/>
            <person name="Ren S.-X."/>
            <person name="Li H.-L."/>
            <person name="Wang Y.-X."/>
            <person name="Fu G."/>
            <person name="Yang J."/>
            <person name="Qin Z.-Q."/>
            <person name="Miao Y.-G."/>
            <person name="Wang W.-Y."/>
            <person name="Chen R.-S."/>
            <person name="Shen Y."/>
            <person name="Chen Z."/>
            <person name="Yuan Z.-H."/>
            <person name="Zhao G.-P."/>
            <person name="Qu D."/>
            <person name="Danchin A."/>
            <person name="Wen Y.-M."/>
        </authorList>
    </citation>
    <scope>NUCLEOTIDE SEQUENCE [LARGE SCALE GENOMIC DNA]</scope>
    <source>
        <strain>ATCC 12228 / FDA PCI 1200</strain>
    </source>
</reference>
<organism>
    <name type="scientific">Staphylococcus epidermidis (strain ATCC 12228 / FDA PCI 1200)</name>
    <dbReference type="NCBI Taxonomy" id="176280"/>
    <lineage>
        <taxon>Bacteria</taxon>
        <taxon>Bacillati</taxon>
        <taxon>Bacillota</taxon>
        <taxon>Bacilli</taxon>
        <taxon>Bacillales</taxon>
        <taxon>Staphylococcaceae</taxon>
        <taxon>Staphylococcus</taxon>
    </lineage>
</organism>
<keyword id="KW-0028">Amino-acid biosynthesis</keyword>
<keyword id="KW-0963">Cytoplasm</keyword>
<keyword id="KW-0368">Histidine biosynthesis</keyword>
<keyword id="KW-0456">Lyase</keyword>
<comment type="function">
    <text evidence="1">IGPS catalyzes the conversion of PRFAR and glutamine to IGP, AICAR and glutamate. The HisF subunit catalyzes the cyclization activity that produces IGP and AICAR from PRFAR using the ammonia provided by the HisH subunit.</text>
</comment>
<comment type="catalytic activity">
    <reaction evidence="1">
        <text>5-[(5-phospho-1-deoxy-D-ribulos-1-ylimino)methylamino]-1-(5-phospho-beta-D-ribosyl)imidazole-4-carboxamide + L-glutamine = D-erythro-1-(imidazol-4-yl)glycerol 3-phosphate + 5-amino-1-(5-phospho-beta-D-ribosyl)imidazole-4-carboxamide + L-glutamate + H(+)</text>
        <dbReference type="Rhea" id="RHEA:24793"/>
        <dbReference type="ChEBI" id="CHEBI:15378"/>
        <dbReference type="ChEBI" id="CHEBI:29985"/>
        <dbReference type="ChEBI" id="CHEBI:58278"/>
        <dbReference type="ChEBI" id="CHEBI:58359"/>
        <dbReference type="ChEBI" id="CHEBI:58475"/>
        <dbReference type="ChEBI" id="CHEBI:58525"/>
        <dbReference type="EC" id="4.3.2.10"/>
    </reaction>
</comment>
<comment type="pathway">
    <text evidence="1">Amino-acid biosynthesis; L-histidine biosynthesis; L-histidine from 5-phospho-alpha-D-ribose 1-diphosphate: step 5/9.</text>
</comment>
<comment type="subunit">
    <text evidence="1">Heterodimer of HisH and HisF.</text>
</comment>
<comment type="subcellular location">
    <subcellularLocation>
        <location evidence="1">Cytoplasm</location>
    </subcellularLocation>
</comment>
<comment type="similarity">
    <text evidence="1">Belongs to the HisA/HisF family.</text>
</comment>
<accession>Q8CQ92</accession>
<feature type="chain" id="PRO_0000142238" description="Imidazole glycerol phosphate synthase subunit HisF">
    <location>
        <begin position="1"/>
        <end position="252"/>
    </location>
</feature>
<feature type="active site" evidence="1">
    <location>
        <position position="11"/>
    </location>
</feature>
<feature type="active site" evidence="1">
    <location>
        <position position="130"/>
    </location>
</feature>